<sequence>MIKIIGLDPGMSKTGWAIIRLEEKNNIKFLGGGTISTDGKLGVGERLHIIFEQLKKVIFLYSPNEAAVEKIFINKNPKSSLTLGYARAIAILILRMTDLPMNEYDANYIKKSITGNGHADKGQIIFMVKQIVKSSNIKCHHTADALATAICHAYTKNFCFMGIGS</sequence>
<feature type="chain" id="PRO_1000090573" description="Crossover junction endodeoxyribonuclease RuvC">
    <location>
        <begin position="1"/>
        <end position="165"/>
    </location>
</feature>
<feature type="active site" evidence="1">
    <location>
        <position position="8"/>
    </location>
</feature>
<feature type="active site" evidence="1">
    <location>
        <position position="69"/>
    </location>
</feature>
<feature type="active site" evidence="1">
    <location>
        <position position="141"/>
    </location>
</feature>
<feature type="binding site" evidence="1">
    <location>
        <position position="8"/>
    </location>
    <ligand>
        <name>Mg(2+)</name>
        <dbReference type="ChEBI" id="CHEBI:18420"/>
        <label>1</label>
    </ligand>
</feature>
<feature type="binding site" evidence="1">
    <location>
        <position position="69"/>
    </location>
    <ligand>
        <name>Mg(2+)</name>
        <dbReference type="ChEBI" id="CHEBI:18420"/>
        <label>2</label>
    </ligand>
</feature>
<feature type="binding site" evidence="1">
    <location>
        <position position="141"/>
    </location>
    <ligand>
        <name>Mg(2+)</name>
        <dbReference type="ChEBI" id="CHEBI:18420"/>
        <label>1</label>
    </ligand>
</feature>
<reference key="1">
    <citation type="journal article" date="2008" name="Mol. Biol. Evol.">
        <title>Genome evolution of Wolbachia strain wPip from the Culex pipiens group.</title>
        <authorList>
            <person name="Klasson L."/>
            <person name="Walker T."/>
            <person name="Sebaihia M."/>
            <person name="Sanders M.J."/>
            <person name="Quail M.A."/>
            <person name="Lord A."/>
            <person name="Sanders S."/>
            <person name="Earl J."/>
            <person name="O'Neill S.L."/>
            <person name="Thomson N."/>
            <person name="Sinkins S.P."/>
            <person name="Parkhill J."/>
        </authorList>
    </citation>
    <scope>NUCLEOTIDE SEQUENCE [LARGE SCALE GENOMIC DNA]</scope>
    <source>
        <strain>wPip</strain>
    </source>
</reference>
<organism>
    <name type="scientific">Wolbachia pipientis subsp. Culex pipiens (strain wPip)</name>
    <dbReference type="NCBI Taxonomy" id="570417"/>
    <lineage>
        <taxon>Bacteria</taxon>
        <taxon>Pseudomonadati</taxon>
        <taxon>Pseudomonadota</taxon>
        <taxon>Alphaproteobacteria</taxon>
        <taxon>Rickettsiales</taxon>
        <taxon>Anaplasmataceae</taxon>
        <taxon>Wolbachieae</taxon>
        <taxon>Wolbachia</taxon>
    </lineage>
</organism>
<keyword id="KW-0963">Cytoplasm</keyword>
<keyword id="KW-0227">DNA damage</keyword>
<keyword id="KW-0233">DNA recombination</keyword>
<keyword id="KW-0234">DNA repair</keyword>
<keyword id="KW-0238">DNA-binding</keyword>
<keyword id="KW-0255">Endonuclease</keyword>
<keyword id="KW-0378">Hydrolase</keyword>
<keyword id="KW-0460">Magnesium</keyword>
<keyword id="KW-0479">Metal-binding</keyword>
<keyword id="KW-0540">Nuclease</keyword>
<comment type="function">
    <text evidence="1">The RuvA-RuvB-RuvC complex processes Holliday junction (HJ) DNA during genetic recombination and DNA repair. Endonuclease that resolves HJ intermediates. Cleaves cruciform DNA by making single-stranded nicks across the HJ at symmetrical positions within the homologous arms, yielding a 5'-phosphate and a 3'-hydroxyl group; requires a central core of homology in the junction. The consensus cleavage sequence is 5'-(A/T)TT(C/G)-3'. Cleavage occurs on the 3'-side of the TT dinucleotide at the point of strand exchange. HJ branch migration catalyzed by RuvA-RuvB allows RuvC to scan DNA until it finds its consensus sequence, where it cleaves and resolves the cruciform DNA.</text>
</comment>
<comment type="catalytic activity">
    <reaction evidence="1">
        <text>Endonucleolytic cleavage at a junction such as a reciprocal single-stranded crossover between two homologous DNA duplexes (Holliday junction).</text>
        <dbReference type="EC" id="3.1.21.10"/>
    </reaction>
</comment>
<comment type="cofactor">
    <cofactor evidence="1">
        <name>Mg(2+)</name>
        <dbReference type="ChEBI" id="CHEBI:18420"/>
    </cofactor>
    <text evidence="1">Binds 2 Mg(2+) ion per subunit.</text>
</comment>
<comment type="subunit">
    <text evidence="1">Homodimer which binds Holliday junction (HJ) DNA. The HJ becomes 2-fold symmetrical on binding to RuvC with unstacked arms; it has a different conformation from HJ DNA in complex with RuvA. In the full resolvosome a probable DNA-RuvA(4)-RuvB(12)-RuvC(2) complex forms which resolves the HJ.</text>
</comment>
<comment type="subcellular location">
    <subcellularLocation>
        <location evidence="1">Cytoplasm</location>
    </subcellularLocation>
</comment>
<comment type="similarity">
    <text evidence="1">Belongs to the RuvC family.</text>
</comment>
<protein>
    <recommendedName>
        <fullName evidence="1">Crossover junction endodeoxyribonuclease RuvC</fullName>
        <ecNumber evidence="1">3.1.21.10</ecNumber>
    </recommendedName>
    <alternativeName>
        <fullName evidence="1">Holliday junction nuclease RuvC</fullName>
    </alternativeName>
    <alternativeName>
        <fullName evidence="1">Holliday junction resolvase RuvC</fullName>
    </alternativeName>
</protein>
<dbReference type="EC" id="3.1.21.10" evidence="1"/>
<dbReference type="EMBL" id="AM999887">
    <property type="protein sequence ID" value="CAQ55254.1"/>
    <property type="molecule type" value="Genomic_DNA"/>
</dbReference>
<dbReference type="RefSeq" id="WP_012481999.1">
    <property type="nucleotide sequence ID" value="NC_010981.1"/>
</dbReference>
<dbReference type="SMR" id="B3CN07"/>
<dbReference type="KEGG" id="wpi:WP1146"/>
<dbReference type="eggNOG" id="COG0817">
    <property type="taxonomic scope" value="Bacteria"/>
</dbReference>
<dbReference type="HOGENOM" id="CLU_091257_1_0_5"/>
<dbReference type="Proteomes" id="UP000008814">
    <property type="component" value="Chromosome"/>
</dbReference>
<dbReference type="GO" id="GO:0005737">
    <property type="term" value="C:cytoplasm"/>
    <property type="evidence" value="ECO:0007669"/>
    <property type="project" value="UniProtKB-SubCell"/>
</dbReference>
<dbReference type="GO" id="GO:0048476">
    <property type="term" value="C:Holliday junction resolvase complex"/>
    <property type="evidence" value="ECO:0007669"/>
    <property type="project" value="UniProtKB-UniRule"/>
</dbReference>
<dbReference type="GO" id="GO:0008821">
    <property type="term" value="F:crossover junction DNA endonuclease activity"/>
    <property type="evidence" value="ECO:0007669"/>
    <property type="project" value="UniProtKB-UniRule"/>
</dbReference>
<dbReference type="GO" id="GO:0003677">
    <property type="term" value="F:DNA binding"/>
    <property type="evidence" value="ECO:0007669"/>
    <property type="project" value="UniProtKB-KW"/>
</dbReference>
<dbReference type="GO" id="GO:0000287">
    <property type="term" value="F:magnesium ion binding"/>
    <property type="evidence" value="ECO:0007669"/>
    <property type="project" value="UniProtKB-UniRule"/>
</dbReference>
<dbReference type="GO" id="GO:0006310">
    <property type="term" value="P:DNA recombination"/>
    <property type="evidence" value="ECO:0007669"/>
    <property type="project" value="UniProtKB-UniRule"/>
</dbReference>
<dbReference type="GO" id="GO:0006281">
    <property type="term" value="P:DNA repair"/>
    <property type="evidence" value="ECO:0007669"/>
    <property type="project" value="UniProtKB-UniRule"/>
</dbReference>
<dbReference type="CDD" id="cd16962">
    <property type="entry name" value="RuvC"/>
    <property type="match status" value="1"/>
</dbReference>
<dbReference type="FunFam" id="3.30.420.10:FF:000002">
    <property type="entry name" value="Crossover junction endodeoxyribonuclease RuvC"/>
    <property type="match status" value="1"/>
</dbReference>
<dbReference type="Gene3D" id="3.30.420.10">
    <property type="entry name" value="Ribonuclease H-like superfamily/Ribonuclease H"/>
    <property type="match status" value="1"/>
</dbReference>
<dbReference type="HAMAP" id="MF_00034">
    <property type="entry name" value="RuvC"/>
    <property type="match status" value="1"/>
</dbReference>
<dbReference type="InterPro" id="IPR012337">
    <property type="entry name" value="RNaseH-like_sf"/>
</dbReference>
<dbReference type="InterPro" id="IPR036397">
    <property type="entry name" value="RNaseH_sf"/>
</dbReference>
<dbReference type="InterPro" id="IPR002176">
    <property type="entry name" value="X-over_junc_endoDNase_RuvC"/>
</dbReference>
<dbReference type="NCBIfam" id="TIGR00228">
    <property type="entry name" value="ruvC"/>
    <property type="match status" value="1"/>
</dbReference>
<dbReference type="PANTHER" id="PTHR30194">
    <property type="entry name" value="CROSSOVER JUNCTION ENDODEOXYRIBONUCLEASE RUVC"/>
    <property type="match status" value="1"/>
</dbReference>
<dbReference type="PANTHER" id="PTHR30194:SF3">
    <property type="entry name" value="CROSSOVER JUNCTION ENDODEOXYRIBONUCLEASE RUVC"/>
    <property type="match status" value="1"/>
</dbReference>
<dbReference type="Pfam" id="PF02075">
    <property type="entry name" value="RuvC"/>
    <property type="match status" value="1"/>
</dbReference>
<dbReference type="PRINTS" id="PR00696">
    <property type="entry name" value="RSOLVASERUVC"/>
</dbReference>
<dbReference type="SUPFAM" id="SSF53098">
    <property type="entry name" value="Ribonuclease H-like"/>
    <property type="match status" value="1"/>
</dbReference>
<accession>B3CN07</accession>
<name>RUVC_WOLPP</name>
<gene>
    <name evidence="1" type="primary">ruvC</name>
    <name type="ordered locus">WP1146</name>
</gene>
<evidence type="ECO:0000255" key="1">
    <source>
        <dbReference type="HAMAP-Rule" id="MF_00034"/>
    </source>
</evidence>
<proteinExistence type="inferred from homology"/>